<protein>
    <recommendedName>
        <fullName>Probable protein S-acyltransferase 1</fullName>
        <ecNumber>2.3.1.225</ecNumber>
    </recommendedName>
    <alternativeName>
        <fullName>Probable palmitoyltransferase At3g56920</fullName>
    </alternativeName>
    <alternativeName>
        <fullName>Zinc finger DHHC domain-containing protein At3g56920</fullName>
    </alternativeName>
</protein>
<organism>
    <name type="scientific">Arabidopsis thaliana</name>
    <name type="common">Mouse-ear cress</name>
    <dbReference type="NCBI Taxonomy" id="3702"/>
    <lineage>
        <taxon>Eukaryota</taxon>
        <taxon>Viridiplantae</taxon>
        <taxon>Streptophyta</taxon>
        <taxon>Embryophyta</taxon>
        <taxon>Tracheophyta</taxon>
        <taxon>Spermatophyta</taxon>
        <taxon>Magnoliopsida</taxon>
        <taxon>eudicotyledons</taxon>
        <taxon>Gunneridae</taxon>
        <taxon>Pentapetalae</taxon>
        <taxon>rosids</taxon>
        <taxon>malvids</taxon>
        <taxon>Brassicales</taxon>
        <taxon>Brassicaceae</taxon>
        <taxon>Camelineae</taxon>
        <taxon>Arabidopsis</taxon>
    </lineage>
</organism>
<sequence length="338" mass="38669">MSSQNLERQRIYQVWPAKNKFYCGGRLVFGPDASSLLLTTCMIGGPAIAFSIRMAYLISHRHPFFHSLTLIGAILLTFMAFTFLFLTSSRDPGIIPRNKQVSEAEIPDVTTQSTEWVTSKLGSVKLPRTKDVMVNGFTVKVKFCDTCQLYRPPRAFHCSICNNCVQRFDHHCPWVGQCIALRNYPFFVCFLSCSTLLCIYVFVFSWVSMLKVHGEFYVVLADDLILGVLGLYCFVSVWFVGGLTVFHFYLICTNQTTCENFRYHYDKKENPYRKGILENFKELFFAKIPPPLINFRDWSPEEEDDVEVGSIASELVRAFGPKDTKMSSGKSDSEARER</sequence>
<reference key="1">
    <citation type="journal article" date="2000" name="Nature">
        <title>Sequence and analysis of chromosome 3 of the plant Arabidopsis thaliana.</title>
        <authorList>
            <person name="Salanoubat M."/>
            <person name="Lemcke K."/>
            <person name="Rieger M."/>
            <person name="Ansorge W."/>
            <person name="Unseld M."/>
            <person name="Fartmann B."/>
            <person name="Valle G."/>
            <person name="Bloecker H."/>
            <person name="Perez-Alonso M."/>
            <person name="Obermaier B."/>
            <person name="Delseny M."/>
            <person name="Boutry M."/>
            <person name="Grivell L.A."/>
            <person name="Mache R."/>
            <person name="Puigdomenech P."/>
            <person name="De Simone V."/>
            <person name="Choisne N."/>
            <person name="Artiguenave F."/>
            <person name="Robert C."/>
            <person name="Brottier P."/>
            <person name="Wincker P."/>
            <person name="Cattolico L."/>
            <person name="Weissenbach J."/>
            <person name="Saurin W."/>
            <person name="Quetier F."/>
            <person name="Schaefer M."/>
            <person name="Mueller-Auer S."/>
            <person name="Gabel C."/>
            <person name="Fuchs M."/>
            <person name="Benes V."/>
            <person name="Wurmbach E."/>
            <person name="Drzonek H."/>
            <person name="Erfle H."/>
            <person name="Jordan N."/>
            <person name="Bangert S."/>
            <person name="Wiedelmann R."/>
            <person name="Kranz H."/>
            <person name="Voss H."/>
            <person name="Holland R."/>
            <person name="Brandt P."/>
            <person name="Nyakatura G."/>
            <person name="Vezzi A."/>
            <person name="D'Angelo M."/>
            <person name="Pallavicini A."/>
            <person name="Toppo S."/>
            <person name="Simionati B."/>
            <person name="Conrad A."/>
            <person name="Hornischer K."/>
            <person name="Kauer G."/>
            <person name="Loehnert T.-H."/>
            <person name="Nordsiek G."/>
            <person name="Reichelt J."/>
            <person name="Scharfe M."/>
            <person name="Schoen O."/>
            <person name="Bargues M."/>
            <person name="Terol J."/>
            <person name="Climent J."/>
            <person name="Navarro P."/>
            <person name="Collado C."/>
            <person name="Perez-Perez A."/>
            <person name="Ottenwaelder B."/>
            <person name="Duchemin D."/>
            <person name="Cooke R."/>
            <person name="Laudie M."/>
            <person name="Berger-Llauro C."/>
            <person name="Purnelle B."/>
            <person name="Masuy D."/>
            <person name="de Haan M."/>
            <person name="Maarse A.C."/>
            <person name="Alcaraz J.-P."/>
            <person name="Cottet A."/>
            <person name="Casacuberta E."/>
            <person name="Monfort A."/>
            <person name="Argiriou A."/>
            <person name="Flores M."/>
            <person name="Liguori R."/>
            <person name="Vitale D."/>
            <person name="Mannhaupt G."/>
            <person name="Haase D."/>
            <person name="Schoof H."/>
            <person name="Rudd S."/>
            <person name="Zaccaria P."/>
            <person name="Mewes H.-W."/>
            <person name="Mayer K.F.X."/>
            <person name="Kaul S."/>
            <person name="Town C.D."/>
            <person name="Koo H.L."/>
            <person name="Tallon L.J."/>
            <person name="Jenkins J."/>
            <person name="Rooney T."/>
            <person name="Rizzo M."/>
            <person name="Walts A."/>
            <person name="Utterback T."/>
            <person name="Fujii C.Y."/>
            <person name="Shea T.P."/>
            <person name="Creasy T.H."/>
            <person name="Haas B."/>
            <person name="Maiti R."/>
            <person name="Wu D."/>
            <person name="Peterson J."/>
            <person name="Van Aken S."/>
            <person name="Pai G."/>
            <person name="Militscher J."/>
            <person name="Sellers P."/>
            <person name="Gill J.E."/>
            <person name="Feldblyum T.V."/>
            <person name="Preuss D."/>
            <person name="Lin X."/>
            <person name="Nierman W.C."/>
            <person name="Salzberg S.L."/>
            <person name="White O."/>
            <person name="Venter J.C."/>
            <person name="Fraser C.M."/>
            <person name="Kaneko T."/>
            <person name="Nakamura Y."/>
            <person name="Sato S."/>
            <person name="Kato T."/>
            <person name="Asamizu E."/>
            <person name="Sasamoto S."/>
            <person name="Kimura T."/>
            <person name="Idesawa K."/>
            <person name="Kawashima K."/>
            <person name="Kishida Y."/>
            <person name="Kiyokawa C."/>
            <person name="Kohara M."/>
            <person name="Matsumoto M."/>
            <person name="Matsuno A."/>
            <person name="Muraki A."/>
            <person name="Nakayama S."/>
            <person name="Nakazaki N."/>
            <person name="Shinpo S."/>
            <person name="Takeuchi C."/>
            <person name="Wada T."/>
            <person name="Watanabe A."/>
            <person name="Yamada M."/>
            <person name="Yasuda M."/>
            <person name="Tabata S."/>
        </authorList>
    </citation>
    <scope>NUCLEOTIDE SEQUENCE [LARGE SCALE GENOMIC DNA]</scope>
    <source>
        <strain>cv. Columbia</strain>
    </source>
</reference>
<reference key="2">
    <citation type="journal article" date="2017" name="Plant J.">
        <title>Araport11: a complete reannotation of the Arabidopsis thaliana reference genome.</title>
        <authorList>
            <person name="Cheng C.Y."/>
            <person name="Krishnakumar V."/>
            <person name="Chan A.P."/>
            <person name="Thibaud-Nissen F."/>
            <person name="Schobel S."/>
            <person name="Town C.D."/>
        </authorList>
    </citation>
    <scope>GENOME REANNOTATION</scope>
    <source>
        <strain>cv. Columbia</strain>
    </source>
</reference>
<reference key="3">
    <citation type="submission" date="2008-06" db="EMBL/GenBank/DDBJ databases">
        <title>Arabidopsis ORF clones.</title>
        <authorList>
            <person name="De Los Reyes C."/>
            <person name="Quan R."/>
            <person name="Chen H."/>
            <person name="Bautista V.R."/>
            <person name="Kim C.J."/>
            <person name="Ecker J.R."/>
        </authorList>
    </citation>
    <scope>NUCLEOTIDE SEQUENCE [LARGE SCALE MRNA]</scope>
    <source>
        <strain>cv. Columbia</strain>
    </source>
</reference>
<reference key="4">
    <citation type="book" date="2007" name="Proceedings of the 18th international conference on Arabidopsis research">
        <title>S-acylation: dynamic control of plant development and sigalling by lipid modification of proteins.</title>
        <authorList>
            <person name="Hemsley P.A."/>
            <person name="Taylor L."/>
            <person name="Grierson C.S."/>
        </authorList>
    </citation>
    <scope>GENE FAMILY</scope>
    <scope>FUNCTION</scope>
</reference>
<reference key="5">
    <citation type="journal article" date="2012" name="Plant Physiol.">
        <title>Genomics and localization of the Arabidopsis DHHC-cysteine-rich domain S-acyltransferase protein family.</title>
        <authorList>
            <person name="Batistic O."/>
        </authorList>
    </citation>
    <scope>SUBCELLULAR LOCATION</scope>
    <scope>GENE FAMILY</scope>
    <scope>NOMENCLATURE</scope>
</reference>
<keyword id="KW-0012">Acyltransferase</keyword>
<keyword id="KW-0967">Endosome</keyword>
<keyword id="KW-0449">Lipoprotein</keyword>
<keyword id="KW-0472">Membrane</keyword>
<keyword id="KW-0564">Palmitate</keyword>
<keyword id="KW-1185">Reference proteome</keyword>
<keyword id="KW-0808">Transferase</keyword>
<keyword id="KW-0812">Transmembrane</keyword>
<keyword id="KW-1133">Transmembrane helix</keyword>
<comment type="function">
    <text evidence="1 5">Palmitoyl acyltransferase.</text>
</comment>
<comment type="catalytic activity">
    <reaction>
        <text>L-cysteinyl-[protein] + hexadecanoyl-CoA = S-hexadecanoyl-L-cysteinyl-[protein] + CoA</text>
        <dbReference type="Rhea" id="RHEA:36683"/>
        <dbReference type="Rhea" id="RHEA-COMP:10131"/>
        <dbReference type="Rhea" id="RHEA-COMP:11032"/>
        <dbReference type="ChEBI" id="CHEBI:29950"/>
        <dbReference type="ChEBI" id="CHEBI:57287"/>
        <dbReference type="ChEBI" id="CHEBI:57379"/>
        <dbReference type="ChEBI" id="CHEBI:74151"/>
        <dbReference type="EC" id="2.3.1.225"/>
    </reaction>
</comment>
<comment type="subcellular location">
    <subcellularLocation>
        <location evidence="6">Endosome membrane</location>
        <topology evidence="6">Multi-pass membrane protein</topology>
    </subcellularLocation>
</comment>
<comment type="domain">
    <text evidence="1">The DHHC domain is required for palmitoyltransferase activity.</text>
</comment>
<comment type="similarity">
    <text evidence="6">Belongs to the DHHC palmitoyltransferase family.</text>
</comment>
<comment type="sequence caution" evidence="6">
    <conflict type="erroneous gene model prediction">
        <sequence resource="EMBL-CDS" id="CAC00755"/>
    </conflict>
</comment>
<name>ZDH12_ARATH</name>
<gene>
    <name type="primary">PAT01</name>
    <name type="ordered locus">At3g56920</name>
    <name type="ORF">T8M16_250</name>
</gene>
<proteinExistence type="evidence at transcript level"/>
<evidence type="ECO:0000250" key="1"/>
<evidence type="ECO:0000255" key="2"/>
<evidence type="ECO:0000255" key="3">
    <source>
        <dbReference type="PROSITE-ProRule" id="PRU00067"/>
    </source>
</evidence>
<evidence type="ECO:0000256" key="4">
    <source>
        <dbReference type="SAM" id="MobiDB-lite"/>
    </source>
</evidence>
<evidence type="ECO:0000269" key="5">
    <source ref="4"/>
</evidence>
<evidence type="ECO:0000305" key="6"/>
<dbReference type="EC" id="2.3.1.225"/>
<dbReference type="EMBL" id="AL390921">
    <property type="protein sequence ID" value="CAC00755.1"/>
    <property type="status" value="ALT_SEQ"/>
    <property type="molecule type" value="Genomic_DNA"/>
</dbReference>
<dbReference type="EMBL" id="CP002686">
    <property type="protein sequence ID" value="AEE79586.1"/>
    <property type="molecule type" value="Genomic_DNA"/>
</dbReference>
<dbReference type="EMBL" id="BT032875">
    <property type="protein sequence ID" value="ACD89065.1"/>
    <property type="molecule type" value="mRNA"/>
</dbReference>
<dbReference type="PIR" id="T51280">
    <property type="entry name" value="T51280"/>
</dbReference>
<dbReference type="RefSeq" id="NP_191251.2">
    <property type="nucleotide sequence ID" value="NM_115551.3"/>
</dbReference>
<dbReference type="SMR" id="B3DN87"/>
<dbReference type="FunCoup" id="B3DN87">
    <property type="interactions" value="1624"/>
</dbReference>
<dbReference type="iPTMnet" id="B3DN87"/>
<dbReference type="PaxDb" id="3702-AT3G56920.1"/>
<dbReference type="ProteomicsDB" id="242931"/>
<dbReference type="EnsemblPlants" id="AT3G56920.1">
    <property type="protein sequence ID" value="AT3G56920.1"/>
    <property type="gene ID" value="AT3G56920"/>
</dbReference>
<dbReference type="GeneID" id="824859"/>
<dbReference type="Gramene" id="AT3G56920.1">
    <property type="protein sequence ID" value="AT3G56920.1"/>
    <property type="gene ID" value="AT3G56920"/>
</dbReference>
<dbReference type="KEGG" id="ath:AT3G56920"/>
<dbReference type="Araport" id="AT3G56920"/>
<dbReference type="TAIR" id="AT3G56920"/>
<dbReference type="eggNOG" id="KOG1311">
    <property type="taxonomic scope" value="Eukaryota"/>
</dbReference>
<dbReference type="HOGENOM" id="CLU_018741_7_1_1"/>
<dbReference type="InParanoid" id="B3DN87"/>
<dbReference type="OMA" id="ISHRHPF"/>
<dbReference type="PhylomeDB" id="B3DN87"/>
<dbReference type="BRENDA" id="2.3.1.225">
    <property type="organism ID" value="399"/>
</dbReference>
<dbReference type="PRO" id="PR:B3DN87"/>
<dbReference type="Proteomes" id="UP000006548">
    <property type="component" value="Chromosome 3"/>
</dbReference>
<dbReference type="ExpressionAtlas" id="B3DN87">
    <property type="expression patterns" value="baseline and differential"/>
</dbReference>
<dbReference type="GO" id="GO:0010008">
    <property type="term" value="C:endosome membrane"/>
    <property type="evidence" value="ECO:0007669"/>
    <property type="project" value="UniProtKB-SubCell"/>
</dbReference>
<dbReference type="GO" id="GO:0019706">
    <property type="term" value="F:protein-cysteine S-palmitoyltransferase activity"/>
    <property type="evidence" value="ECO:0007669"/>
    <property type="project" value="UniProtKB-EC"/>
</dbReference>
<dbReference type="InterPro" id="IPR001594">
    <property type="entry name" value="Palmitoyltrfase_DHHC"/>
</dbReference>
<dbReference type="InterPro" id="IPR039859">
    <property type="entry name" value="PFA4/ZDH16/20/ERF2-like"/>
</dbReference>
<dbReference type="PANTHER" id="PTHR22883:SF284">
    <property type="entry name" value="PROTEIN S-ACYLTRANSFERASE 1-RELATED"/>
    <property type="match status" value="1"/>
</dbReference>
<dbReference type="PANTHER" id="PTHR22883">
    <property type="entry name" value="ZINC FINGER DHHC DOMAIN CONTAINING PROTEIN"/>
    <property type="match status" value="1"/>
</dbReference>
<dbReference type="Pfam" id="PF01529">
    <property type="entry name" value="DHHC"/>
    <property type="match status" value="1"/>
</dbReference>
<dbReference type="PROSITE" id="PS50216">
    <property type="entry name" value="DHHC"/>
    <property type="match status" value="1"/>
</dbReference>
<feature type="chain" id="PRO_0000363598" description="Probable protein S-acyltransferase 1">
    <location>
        <begin position="1"/>
        <end position="338"/>
    </location>
</feature>
<feature type="transmembrane region" description="Helical" evidence="2">
    <location>
        <begin position="32"/>
        <end position="52"/>
    </location>
</feature>
<feature type="transmembrane region" description="Helical" evidence="2">
    <location>
        <begin position="68"/>
        <end position="88"/>
    </location>
</feature>
<feature type="transmembrane region" description="Helical" evidence="2">
    <location>
        <begin position="186"/>
        <end position="206"/>
    </location>
</feature>
<feature type="transmembrane region" description="Helical" evidence="2">
    <location>
        <begin position="225"/>
        <end position="245"/>
    </location>
</feature>
<feature type="domain" description="DHHC" evidence="3">
    <location>
        <begin position="142"/>
        <end position="192"/>
    </location>
</feature>
<feature type="region of interest" description="Disordered" evidence="4">
    <location>
        <begin position="319"/>
        <end position="338"/>
    </location>
</feature>
<feature type="compositionally biased region" description="Basic and acidic residues" evidence="4">
    <location>
        <begin position="320"/>
        <end position="338"/>
    </location>
</feature>
<feature type="active site" description="S-palmitoyl cysteine intermediate" evidence="1">
    <location>
        <position position="172"/>
    </location>
</feature>
<accession>B3DN87</accession>
<accession>Q9LER6</accession>